<feature type="chain" id="PRO_1000077073" description="Ribose-5-phosphate isomerase A">
    <location>
        <begin position="1"/>
        <end position="224"/>
    </location>
</feature>
<feature type="active site" description="Proton acceptor" evidence="1">
    <location>
        <position position="107"/>
    </location>
</feature>
<feature type="binding site" evidence="1">
    <location>
        <begin position="32"/>
        <end position="35"/>
    </location>
    <ligand>
        <name>substrate</name>
    </ligand>
</feature>
<feature type="binding site" evidence="1">
    <location>
        <begin position="85"/>
        <end position="88"/>
    </location>
    <ligand>
        <name>substrate</name>
    </ligand>
</feature>
<feature type="binding site" evidence="1">
    <location>
        <begin position="98"/>
        <end position="101"/>
    </location>
    <ligand>
        <name>substrate</name>
    </ligand>
</feature>
<feature type="binding site" evidence="1">
    <location>
        <position position="125"/>
    </location>
    <ligand>
        <name>substrate</name>
    </ligand>
</feature>
<name>RPIA_PSEPG</name>
<sequence>MTQDQLKQAVAQAAVDFILPKLDEKSVVGVGTGSTANFFIDALAQHKTAFDGAVASSEATAQRLKGHGIPVYELNSVSELEFYVDGADESDAHLNLIKGGGAALTREKIVAAVAKTFICIADGSKLVPVLGAFPLPVEVIPMARSHVARQLVKLGGDPVYREGVVTDNGNVILDVHNLQITNPVELEAQINAIVGVVTNGLFAARPADLLLLGTSEGVKSLKAE</sequence>
<protein>
    <recommendedName>
        <fullName evidence="1">Ribose-5-phosphate isomerase A</fullName>
        <ecNumber evidence="1">5.3.1.6</ecNumber>
    </recommendedName>
    <alternativeName>
        <fullName evidence="1">Phosphoriboisomerase A</fullName>
        <shortName evidence="1">PRI</shortName>
    </alternativeName>
</protein>
<reference key="1">
    <citation type="submission" date="2008-01" db="EMBL/GenBank/DDBJ databases">
        <title>Complete sequence of Pseudomonas putida GB-1.</title>
        <authorList>
            <consortium name="US DOE Joint Genome Institute"/>
            <person name="Copeland A."/>
            <person name="Lucas S."/>
            <person name="Lapidus A."/>
            <person name="Barry K."/>
            <person name="Glavina del Rio T."/>
            <person name="Dalin E."/>
            <person name="Tice H."/>
            <person name="Pitluck S."/>
            <person name="Bruce D."/>
            <person name="Goodwin L."/>
            <person name="Chertkov O."/>
            <person name="Brettin T."/>
            <person name="Detter J.C."/>
            <person name="Han C."/>
            <person name="Kuske C.R."/>
            <person name="Schmutz J."/>
            <person name="Larimer F."/>
            <person name="Land M."/>
            <person name="Hauser L."/>
            <person name="Kyrpides N."/>
            <person name="Kim E."/>
            <person name="McCarthy J.K."/>
            <person name="Richardson P."/>
        </authorList>
    </citation>
    <scope>NUCLEOTIDE SEQUENCE [LARGE SCALE GENOMIC DNA]</scope>
    <source>
        <strain>GB-1</strain>
    </source>
</reference>
<gene>
    <name evidence="1" type="primary">rpiA</name>
    <name type="ordered locus">PputGB1_5203</name>
</gene>
<dbReference type="EC" id="5.3.1.6" evidence="1"/>
<dbReference type="EMBL" id="CP000926">
    <property type="protein sequence ID" value="ABZ01086.1"/>
    <property type="molecule type" value="Genomic_DNA"/>
</dbReference>
<dbReference type="RefSeq" id="WP_012274697.1">
    <property type="nucleotide sequence ID" value="NC_010322.1"/>
</dbReference>
<dbReference type="SMR" id="B0KP28"/>
<dbReference type="KEGG" id="ppg:PputGB1_5203"/>
<dbReference type="eggNOG" id="COG0120">
    <property type="taxonomic scope" value="Bacteria"/>
</dbReference>
<dbReference type="HOGENOM" id="CLU_056590_1_1_6"/>
<dbReference type="UniPathway" id="UPA00115">
    <property type="reaction ID" value="UER00412"/>
</dbReference>
<dbReference type="Proteomes" id="UP000002157">
    <property type="component" value="Chromosome"/>
</dbReference>
<dbReference type="GO" id="GO:0005829">
    <property type="term" value="C:cytosol"/>
    <property type="evidence" value="ECO:0007669"/>
    <property type="project" value="TreeGrafter"/>
</dbReference>
<dbReference type="GO" id="GO:0004751">
    <property type="term" value="F:ribose-5-phosphate isomerase activity"/>
    <property type="evidence" value="ECO:0007669"/>
    <property type="project" value="UniProtKB-UniRule"/>
</dbReference>
<dbReference type="GO" id="GO:0006014">
    <property type="term" value="P:D-ribose metabolic process"/>
    <property type="evidence" value="ECO:0007669"/>
    <property type="project" value="TreeGrafter"/>
</dbReference>
<dbReference type="GO" id="GO:0009052">
    <property type="term" value="P:pentose-phosphate shunt, non-oxidative branch"/>
    <property type="evidence" value="ECO:0007669"/>
    <property type="project" value="UniProtKB-UniRule"/>
</dbReference>
<dbReference type="CDD" id="cd01398">
    <property type="entry name" value="RPI_A"/>
    <property type="match status" value="1"/>
</dbReference>
<dbReference type="FunFam" id="3.30.70.260:FF:000004">
    <property type="entry name" value="Ribose-5-phosphate isomerase A"/>
    <property type="match status" value="1"/>
</dbReference>
<dbReference type="FunFam" id="3.40.50.1360:FF:000001">
    <property type="entry name" value="Ribose-5-phosphate isomerase A"/>
    <property type="match status" value="1"/>
</dbReference>
<dbReference type="Gene3D" id="3.30.70.260">
    <property type="match status" value="1"/>
</dbReference>
<dbReference type="Gene3D" id="3.40.50.1360">
    <property type="match status" value="1"/>
</dbReference>
<dbReference type="HAMAP" id="MF_00170">
    <property type="entry name" value="Rib_5P_isom_A"/>
    <property type="match status" value="1"/>
</dbReference>
<dbReference type="InterPro" id="IPR037171">
    <property type="entry name" value="NagB/RpiA_transferase-like"/>
</dbReference>
<dbReference type="InterPro" id="IPR020672">
    <property type="entry name" value="Ribose5P_isomerase_typA_subgr"/>
</dbReference>
<dbReference type="InterPro" id="IPR004788">
    <property type="entry name" value="Ribose5P_isomerase_type_A"/>
</dbReference>
<dbReference type="NCBIfam" id="NF001924">
    <property type="entry name" value="PRK00702.1"/>
    <property type="match status" value="1"/>
</dbReference>
<dbReference type="NCBIfam" id="TIGR00021">
    <property type="entry name" value="rpiA"/>
    <property type="match status" value="1"/>
</dbReference>
<dbReference type="PANTHER" id="PTHR11934">
    <property type="entry name" value="RIBOSE-5-PHOSPHATE ISOMERASE"/>
    <property type="match status" value="1"/>
</dbReference>
<dbReference type="PANTHER" id="PTHR11934:SF0">
    <property type="entry name" value="RIBOSE-5-PHOSPHATE ISOMERASE"/>
    <property type="match status" value="1"/>
</dbReference>
<dbReference type="Pfam" id="PF06026">
    <property type="entry name" value="Rib_5-P_isom_A"/>
    <property type="match status" value="1"/>
</dbReference>
<dbReference type="SUPFAM" id="SSF75445">
    <property type="entry name" value="D-ribose-5-phosphate isomerase (RpiA), lid domain"/>
    <property type="match status" value="1"/>
</dbReference>
<dbReference type="SUPFAM" id="SSF100950">
    <property type="entry name" value="NagB/RpiA/CoA transferase-like"/>
    <property type="match status" value="1"/>
</dbReference>
<comment type="function">
    <text evidence="1">Catalyzes the reversible conversion of ribose-5-phosphate to ribulose 5-phosphate.</text>
</comment>
<comment type="catalytic activity">
    <reaction evidence="1">
        <text>aldehydo-D-ribose 5-phosphate = D-ribulose 5-phosphate</text>
        <dbReference type="Rhea" id="RHEA:14657"/>
        <dbReference type="ChEBI" id="CHEBI:58121"/>
        <dbReference type="ChEBI" id="CHEBI:58273"/>
        <dbReference type="EC" id="5.3.1.6"/>
    </reaction>
</comment>
<comment type="pathway">
    <text evidence="1">Carbohydrate degradation; pentose phosphate pathway; D-ribose 5-phosphate from D-ribulose 5-phosphate (non-oxidative stage): step 1/1.</text>
</comment>
<comment type="subunit">
    <text evidence="1">Homodimer.</text>
</comment>
<comment type="similarity">
    <text evidence="1">Belongs to the ribose 5-phosphate isomerase family.</text>
</comment>
<accession>B0KP28</accession>
<organism>
    <name type="scientific">Pseudomonas putida (strain GB-1)</name>
    <dbReference type="NCBI Taxonomy" id="76869"/>
    <lineage>
        <taxon>Bacteria</taxon>
        <taxon>Pseudomonadati</taxon>
        <taxon>Pseudomonadota</taxon>
        <taxon>Gammaproteobacteria</taxon>
        <taxon>Pseudomonadales</taxon>
        <taxon>Pseudomonadaceae</taxon>
        <taxon>Pseudomonas</taxon>
    </lineage>
</organism>
<proteinExistence type="inferred from homology"/>
<keyword id="KW-0413">Isomerase</keyword>
<evidence type="ECO:0000255" key="1">
    <source>
        <dbReference type="HAMAP-Rule" id="MF_00170"/>
    </source>
</evidence>